<comment type="function">
    <text evidence="1">Stores iron in a soluble, non-toxic, readily available form. Important for iron homeostasis. Has ferroxidase activity. Iron is taken up in the ferrous form and deposited as ferric hydroxides after oxidation (By similarity).</text>
</comment>
<comment type="catalytic activity">
    <reaction>
        <text>4 Fe(2+) + O2 + 4 H(+) = 4 Fe(3+) + 2 H2O</text>
        <dbReference type="Rhea" id="RHEA:11148"/>
        <dbReference type="ChEBI" id="CHEBI:15377"/>
        <dbReference type="ChEBI" id="CHEBI:15378"/>
        <dbReference type="ChEBI" id="CHEBI:15379"/>
        <dbReference type="ChEBI" id="CHEBI:29033"/>
        <dbReference type="ChEBI" id="CHEBI:29034"/>
        <dbReference type="EC" id="1.16.3.1"/>
    </reaction>
</comment>
<comment type="subunit">
    <text evidence="1">Oligomer of 24 subunits. There are two types of subunits: L (light) chain and H (heavy) chain. The major chain can be light or heavy, depending on the species and tissue type. The functional molecule forms a roughly spherical shell with a diameter of 12 nm and contains a central cavity into which the insoluble mineral iron core is deposited (By similarity).</text>
</comment>
<comment type="subcellular location">
    <subcellularLocation>
        <location evidence="2">Plastid</location>
        <location evidence="2">Chloroplast inner membrane</location>
    </subcellularLocation>
    <text>And other plastids.</text>
</comment>
<comment type="tissue specificity">
    <text evidence="2 3">Leaves.</text>
</comment>
<comment type="miscellaneous">
    <text evidence="3">On the 2D-gel the determined pI of this protein is: 4.74, its MW is: 25.7 kDa.</text>
</comment>
<comment type="similarity">
    <text evidence="3">Belongs to the ferritin family.</text>
</comment>
<accession>P83445</accession>
<reference evidence="3" key="1">
    <citation type="submission" date="2002-09" db="UniProtKB">
        <authorList>
            <person name="Shingles R."/>
            <person name="McCarty R.E."/>
        </authorList>
    </citation>
    <scope>PROTEIN SEQUENCE</scope>
    <scope>SUBCELLULAR LOCATION</scope>
    <scope>TISSUE SPECIFICITY</scope>
    <source>
        <strain>cv. Laxton's Progress</strain>
        <tissue>Leaf</tissue>
    </source>
</reference>
<protein>
    <recommendedName>
        <fullName>Ferritin-2, chloroplastic</fullName>
        <ecNumber>1.16.3.1</ecNumber>
    </recommendedName>
</protein>
<organism evidence="3">
    <name type="scientific">Pisum sativum</name>
    <name type="common">Garden pea</name>
    <name type="synonym">Lathyrus oleraceus</name>
    <dbReference type="NCBI Taxonomy" id="3888"/>
    <lineage>
        <taxon>Eukaryota</taxon>
        <taxon>Viridiplantae</taxon>
        <taxon>Streptophyta</taxon>
        <taxon>Embryophyta</taxon>
        <taxon>Tracheophyta</taxon>
        <taxon>Spermatophyta</taxon>
        <taxon>Magnoliopsida</taxon>
        <taxon>eudicotyledons</taxon>
        <taxon>Gunneridae</taxon>
        <taxon>Pentapetalae</taxon>
        <taxon>rosids</taxon>
        <taxon>fabids</taxon>
        <taxon>Fabales</taxon>
        <taxon>Fabaceae</taxon>
        <taxon>Papilionoideae</taxon>
        <taxon>50 kb inversion clade</taxon>
        <taxon>NPAAA clade</taxon>
        <taxon>Hologalegina</taxon>
        <taxon>IRL clade</taxon>
        <taxon>Fabeae</taxon>
        <taxon>Pisum</taxon>
    </lineage>
</organism>
<dbReference type="EC" id="1.16.3.1"/>
<dbReference type="GO" id="GO:0009706">
    <property type="term" value="C:chloroplast inner membrane"/>
    <property type="evidence" value="ECO:0007669"/>
    <property type="project" value="UniProtKB-SubCell"/>
</dbReference>
<dbReference type="GO" id="GO:0004322">
    <property type="term" value="F:ferroxidase activity"/>
    <property type="evidence" value="ECO:0007669"/>
    <property type="project" value="UniProtKB-EC"/>
</dbReference>
<dbReference type="GO" id="GO:0046872">
    <property type="term" value="F:metal ion binding"/>
    <property type="evidence" value="ECO:0007669"/>
    <property type="project" value="UniProtKB-KW"/>
</dbReference>
<dbReference type="GO" id="GO:0006879">
    <property type="term" value="P:intracellular iron ion homeostasis"/>
    <property type="evidence" value="ECO:0007669"/>
    <property type="project" value="UniProtKB-KW"/>
</dbReference>
<feature type="chain" id="PRO_0000201084" description="Ferritin-2, chloroplastic">
    <location>
        <begin position="1"/>
        <end position="13" status="greater than"/>
    </location>
</feature>
<feature type="non-terminal residue" evidence="3">
    <location>
        <position position="13"/>
    </location>
</feature>
<name>FRI2_PEA</name>
<keyword id="KW-0150">Chloroplast</keyword>
<keyword id="KW-0903">Direct protein sequencing</keyword>
<keyword id="KW-0408">Iron</keyword>
<keyword id="KW-0409">Iron storage</keyword>
<keyword id="KW-0472">Membrane</keyword>
<keyword id="KW-0479">Metal-binding</keyword>
<keyword id="KW-0560">Oxidoreductase</keyword>
<keyword id="KW-0934">Plastid</keyword>
<keyword id="KW-1001">Plastid inner membrane</keyword>
<proteinExistence type="evidence at protein level"/>
<sequence>ATTDSPATLTGVI</sequence>
<evidence type="ECO:0000250" key="1"/>
<evidence type="ECO:0000269" key="2">
    <source ref="1"/>
</evidence>
<evidence type="ECO:0000305" key="3"/>